<sequence length="113" mass="12437">GFPVPDPFIWDASFKTFYDDLDNQHKQLFQAILTQGNVGGATAGDNAYACLVAHFLFEEAAMQVAKYGGYGAHKAAHEEFLGKVKGGSADAAYCKDWLTQHIKTIDFKYKGKL</sequence>
<protein>
    <recommendedName>
        <fullName>Hemerythrin</fullName>
    </recommendedName>
</protein>
<accession>P22766</accession>
<organism>
    <name type="scientific">Siphonosoma cumanense</name>
    <name type="common">Sipunculan worm</name>
    <name type="synonym">Lumbricus edulis</name>
    <dbReference type="NCBI Taxonomy" id="6444"/>
    <lineage>
        <taxon>Eukaryota</taxon>
        <taxon>Metazoa</taxon>
        <taxon>Spiralia</taxon>
        <taxon>Lophotrochozoa</taxon>
        <taxon>Annelida</taxon>
        <taxon>Sipuncula</taxon>
        <taxon>Sipunculidea</taxon>
        <taxon>Golfingiida</taxon>
        <taxon>Sipunculidae</taxon>
        <taxon>Siphonosoma</taxon>
    </lineage>
</organism>
<proteinExistence type="evidence at protein level"/>
<feature type="chain" id="PRO_0000191838" description="Hemerythrin">
    <location>
        <begin position="1"/>
        <end position="113"/>
    </location>
</feature>
<feature type="binding site" evidence="1">
    <location>
        <position position="25"/>
    </location>
    <ligand>
        <name>Fe cation</name>
        <dbReference type="ChEBI" id="CHEBI:24875"/>
        <label>1</label>
    </ligand>
</feature>
<feature type="binding site" evidence="1">
    <location>
        <position position="54"/>
    </location>
    <ligand>
        <name>Fe cation</name>
        <dbReference type="ChEBI" id="CHEBI:24875"/>
        <label>1</label>
    </ligand>
</feature>
<feature type="binding site" evidence="1">
    <location>
        <position position="58"/>
    </location>
    <ligand>
        <name>Fe cation</name>
        <dbReference type="ChEBI" id="CHEBI:24875"/>
        <label>1</label>
    </ligand>
</feature>
<feature type="binding site" evidence="1">
    <location>
        <position position="58"/>
    </location>
    <ligand>
        <name>Fe cation</name>
        <dbReference type="ChEBI" id="CHEBI:24875"/>
        <label>2</label>
    </ligand>
</feature>
<feature type="binding site" evidence="1">
    <location>
        <position position="73"/>
    </location>
    <ligand>
        <name>Fe cation</name>
        <dbReference type="ChEBI" id="CHEBI:24875"/>
        <label>2</label>
    </ligand>
</feature>
<feature type="binding site" evidence="1">
    <location>
        <position position="77"/>
    </location>
    <ligand>
        <name>Fe cation</name>
        <dbReference type="ChEBI" id="CHEBI:24875"/>
        <label>2</label>
    </ligand>
</feature>
<feature type="binding site" evidence="1">
    <location>
        <position position="101"/>
    </location>
    <ligand>
        <name>Fe cation</name>
        <dbReference type="ChEBI" id="CHEBI:24875"/>
        <label>2</label>
    </ligand>
</feature>
<feature type="binding site" evidence="1">
    <location>
        <position position="106"/>
    </location>
    <ligand>
        <name>Fe cation</name>
        <dbReference type="ChEBI" id="CHEBI:24875"/>
        <label>1</label>
    </ligand>
</feature>
<feature type="binding site" evidence="1">
    <location>
        <position position="106"/>
    </location>
    <ligand>
        <name>Fe cation</name>
        <dbReference type="ChEBI" id="CHEBI:24875"/>
        <label>2</label>
    </ligand>
</feature>
<feature type="sequence variant">
    <original>P</original>
    <variation>E</variation>
    <location>
        <position position="3"/>
    </location>
</feature>
<feature type="sequence variant">
    <original>W</original>
    <variation>D</variation>
    <location>
        <position position="10"/>
    </location>
</feature>
<feature type="sequence variant">
    <original>A</original>
    <variation>G</variation>
    <location>
        <position position="60"/>
    </location>
</feature>
<feature type="sequence variant">
    <original>K</original>
    <variation>N</variation>
    <location>
        <position position="66"/>
    </location>
</feature>
<feature type="sequence variant">
    <original>K</original>
    <variation>Q</variation>
    <location>
        <position position="83"/>
    </location>
</feature>
<keyword id="KW-0903">Direct protein sequencing</keyword>
<keyword id="KW-0408">Iron</keyword>
<keyword id="KW-0479">Metal-binding</keyword>
<keyword id="KW-0561">Oxygen transport</keyword>
<keyword id="KW-0813">Transport</keyword>
<evidence type="ECO:0000250" key="1">
    <source>
        <dbReference type="UniProtKB" id="P02244"/>
    </source>
</evidence>
<evidence type="ECO:0000305" key="2"/>
<comment type="function">
    <text>Hemerythrin is a respiratory protein in blood cells of certain marine worms. The oxygen-binding site in each chain contains two iron atoms.</text>
</comment>
<comment type="subunit">
    <text>Homotrimer.</text>
</comment>
<comment type="similarity">
    <text evidence="2">Belongs to the hemerythrin family.</text>
</comment>
<reference key="1">
    <citation type="journal article" date="1990" name="Protein Seq. Data Anal.">
        <title>The amino acid sequence of hemerythrin from Siphonosoma cumanense.</title>
        <authorList>
            <person name="Uchida T."/>
            <person name="Yano H."/>
            <person name="Satake K."/>
            <person name="Kubota I."/>
            <person name="Tsugita A."/>
        </authorList>
    </citation>
    <scope>PROTEIN SEQUENCE</scope>
</reference>
<name>HEMT_SIPCU</name>
<dbReference type="PIR" id="JT0556">
    <property type="entry name" value="HRIN"/>
</dbReference>
<dbReference type="SMR" id="P22766"/>
<dbReference type="GO" id="GO:0005506">
    <property type="term" value="F:iron ion binding"/>
    <property type="evidence" value="ECO:0007669"/>
    <property type="project" value="InterPro"/>
</dbReference>
<dbReference type="GO" id="GO:0005344">
    <property type="term" value="F:oxygen carrier activity"/>
    <property type="evidence" value="ECO:0007669"/>
    <property type="project" value="UniProtKB-KW"/>
</dbReference>
<dbReference type="CDD" id="cd12107">
    <property type="entry name" value="Hemerythrin"/>
    <property type="match status" value="1"/>
</dbReference>
<dbReference type="Gene3D" id="1.20.120.50">
    <property type="entry name" value="Hemerythrin-like"/>
    <property type="match status" value="1"/>
</dbReference>
<dbReference type="InterPro" id="IPR002063">
    <property type="entry name" value="Haemerythrin"/>
</dbReference>
<dbReference type="InterPro" id="IPR016131">
    <property type="entry name" value="Haemerythrin_Fe_BS"/>
</dbReference>
<dbReference type="InterPro" id="IPR050669">
    <property type="entry name" value="Hemerythrin"/>
</dbReference>
<dbReference type="InterPro" id="IPR035938">
    <property type="entry name" value="Hemerythrin-like_sf"/>
</dbReference>
<dbReference type="InterPro" id="IPR012827">
    <property type="entry name" value="Hemerythrin_metal-bd"/>
</dbReference>
<dbReference type="NCBIfam" id="TIGR00058">
    <property type="entry name" value="Hemerythrin"/>
    <property type="match status" value="1"/>
</dbReference>
<dbReference type="PANTHER" id="PTHR37164">
    <property type="entry name" value="BACTERIOHEMERYTHRIN"/>
    <property type="match status" value="1"/>
</dbReference>
<dbReference type="PANTHER" id="PTHR37164:SF1">
    <property type="entry name" value="BACTERIOHEMERYTHRIN"/>
    <property type="match status" value="1"/>
</dbReference>
<dbReference type="PIRSF" id="PIRSF002033">
    <property type="entry name" value="Hemerythrin"/>
    <property type="match status" value="1"/>
</dbReference>
<dbReference type="PRINTS" id="PR00186">
    <property type="entry name" value="HEMERYTHRIN"/>
</dbReference>
<dbReference type="SUPFAM" id="SSF47188">
    <property type="entry name" value="Hemerythrin-like"/>
    <property type="match status" value="1"/>
</dbReference>
<dbReference type="PROSITE" id="PS00550">
    <property type="entry name" value="HEMERYTHRINS"/>
    <property type="match status" value="1"/>
</dbReference>